<protein>
    <recommendedName>
        <fullName evidence="1">Dual-action ribosomal maturation protein DarP</fullName>
    </recommendedName>
    <alternativeName>
        <fullName evidence="1">Large ribosomal subunit assembly factor DarP</fullName>
    </alternativeName>
</protein>
<accession>A4THF5</accession>
<feature type="chain" id="PRO_1000046809" description="Dual-action ribosomal maturation protein DarP">
    <location>
        <begin position="1"/>
        <end position="182"/>
    </location>
</feature>
<name>DARP_YERPP</name>
<reference key="1">
    <citation type="submission" date="2007-02" db="EMBL/GenBank/DDBJ databases">
        <title>Complete sequence of chromosome of Yersinia pestis Pestoides F.</title>
        <authorList>
            <consortium name="US DOE Joint Genome Institute"/>
            <person name="Copeland A."/>
            <person name="Lucas S."/>
            <person name="Lapidus A."/>
            <person name="Barry K."/>
            <person name="Detter J.C."/>
            <person name="Glavina del Rio T."/>
            <person name="Hammon N."/>
            <person name="Israni S."/>
            <person name="Dalin E."/>
            <person name="Tice H."/>
            <person name="Pitluck S."/>
            <person name="Di Bartolo G."/>
            <person name="Chain P."/>
            <person name="Malfatti S."/>
            <person name="Shin M."/>
            <person name="Vergez L."/>
            <person name="Schmutz J."/>
            <person name="Larimer F."/>
            <person name="Land M."/>
            <person name="Hauser L."/>
            <person name="Worsham P."/>
            <person name="Chu M."/>
            <person name="Bearden S."/>
            <person name="Garcia E."/>
            <person name="Richardson P."/>
        </authorList>
    </citation>
    <scope>NUCLEOTIDE SEQUENCE [LARGE SCALE GENOMIC DNA]</scope>
    <source>
        <strain>Pestoides F</strain>
    </source>
</reference>
<dbReference type="EMBL" id="CP000668">
    <property type="protein sequence ID" value="ABP38717.1"/>
    <property type="molecule type" value="Genomic_DNA"/>
</dbReference>
<dbReference type="SMR" id="A4THF5"/>
<dbReference type="KEGG" id="ypp:YPDSF_0298"/>
<dbReference type="PATRIC" id="fig|386656.14.peg.1598"/>
<dbReference type="GO" id="GO:0005829">
    <property type="term" value="C:cytosol"/>
    <property type="evidence" value="ECO:0007669"/>
    <property type="project" value="TreeGrafter"/>
</dbReference>
<dbReference type="GO" id="GO:0043022">
    <property type="term" value="F:ribosome binding"/>
    <property type="evidence" value="ECO:0007669"/>
    <property type="project" value="UniProtKB-UniRule"/>
</dbReference>
<dbReference type="GO" id="GO:0019843">
    <property type="term" value="F:rRNA binding"/>
    <property type="evidence" value="ECO:0007669"/>
    <property type="project" value="UniProtKB-UniRule"/>
</dbReference>
<dbReference type="GO" id="GO:1902626">
    <property type="term" value="P:assembly of large subunit precursor of preribosome"/>
    <property type="evidence" value="ECO:0007669"/>
    <property type="project" value="UniProtKB-UniRule"/>
</dbReference>
<dbReference type="CDD" id="cd16331">
    <property type="entry name" value="YjgA-like"/>
    <property type="match status" value="1"/>
</dbReference>
<dbReference type="FunFam" id="1.10.60.30:FF:000001">
    <property type="entry name" value="UPF0307 protein YjgA"/>
    <property type="match status" value="1"/>
</dbReference>
<dbReference type="FunFam" id="1.10.60.30:FF:000002">
    <property type="entry name" value="UPF0307 protein YjgA"/>
    <property type="match status" value="1"/>
</dbReference>
<dbReference type="Gene3D" id="1.10.60.30">
    <property type="entry name" value="PSPTO4464-like domains"/>
    <property type="match status" value="2"/>
</dbReference>
<dbReference type="HAMAP" id="MF_00765">
    <property type="entry name" value="DarP"/>
    <property type="match status" value="1"/>
</dbReference>
<dbReference type="InterPro" id="IPR006839">
    <property type="entry name" value="DarP"/>
</dbReference>
<dbReference type="InterPro" id="IPR023153">
    <property type="entry name" value="DarP_sf"/>
</dbReference>
<dbReference type="NCBIfam" id="NF003593">
    <property type="entry name" value="PRK05255.1-1"/>
    <property type="match status" value="1"/>
</dbReference>
<dbReference type="PANTHER" id="PTHR38101">
    <property type="entry name" value="UPF0307 PROTEIN YJGA"/>
    <property type="match status" value="1"/>
</dbReference>
<dbReference type="PANTHER" id="PTHR38101:SF1">
    <property type="entry name" value="UPF0307 PROTEIN YJGA"/>
    <property type="match status" value="1"/>
</dbReference>
<dbReference type="Pfam" id="PF04751">
    <property type="entry name" value="DarP"/>
    <property type="match status" value="1"/>
</dbReference>
<dbReference type="PIRSF" id="PIRSF016183">
    <property type="entry name" value="UCP016183"/>
    <property type="match status" value="1"/>
</dbReference>
<dbReference type="SUPFAM" id="SSF158710">
    <property type="entry name" value="PSPTO4464-like"/>
    <property type="match status" value="1"/>
</dbReference>
<gene>
    <name evidence="1" type="primary">darP</name>
    <name type="ordered locus">YPDSF_0298</name>
</gene>
<proteinExistence type="inferred from homology"/>
<evidence type="ECO:0000255" key="1">
    <source>
        <dbReference type="HAMAP-Rule" id="MF_00765"/>
    </source>
</evidence>
<comment type="function">
    <text evidence="1">Member of a network of 50S ribosomal subunit biogenesis factors which assembles along the 30S-50S interface, preventing incorrect 23S rRNA structures from forming. Promotes peptidyl transferase center (PTC) maturation.</text>
</comment>
<comment type="subcellular location">
    <subcellularLocation>
        <location evidence="1">Cytoplasm</location>
    </subcellularLocation>
    <text evidence="1">Associates with late stage pre-50S ribosomal subunits.</text>
</comment>
<comment type="similarity">
    <text evidence="1">Belongs to the DarP family.</text>
</comment>
<organism>
    <name type="scientific">Yersinia pestis (strain Pestoides F)</name>
    <dbReference type="NCBI Taxonomy" id="386656"/>
    <lineage>
        <taxon>Bacteria</taxon>
        <taxon>Pseudomonadati</taxon>
        <taxon>Pseudomonadota</taxon>
        <taxon>Gammaproteobacteria</taxon>
        <taxon>Enterobacterales</taxon>
        <taxon>Yersiniaceae</taxon>
        <taxon>Yersinia</taxon>
    </lineage>
</organism>
<keyword id="KW-0963">Cytoplasm</keyword>
<keyword id="KW-0690">Ribosome biogenesis</keyword>
<keyword id="KW-0694">RNA-binding</keyword>
<keyword id="KW-0699">rRNA-binding</keyword>
<sequence length="182" mass="21156">MNKQPEDWLDDVPENKNDDDDEIIWVSKSEIKRDAEALKDLGTELVDLGKNALERIPLDEDLLAAIELAQKIKKEGRRRQLQLIGKMLRARDVEPIQTALDKLKNRHNQQISLFHKLETLRDRLIAEGDEAIPTVLELYPDADRQQLRSLVRNAQKEQAANKPPKSFRQIFSYLRELAEKKQ</sequence>